<reference key="1">
    <citation type="journal article" date="1997" name="Yeast">
        <title>Sequence analysis of a near-subtelomeric 35.4 kb DNA segment on the right arm of chromosome VII from Saccharomyces cerevisiae carrying the MAL1 locus reveals 15 complete open reading frames, including ZUO1, BGL2 and BIO2 genes and an ABC transporter gene.</title>
        <authorList>
            <person name="Volckaert G."/>
            <person name="Voet M."/>
            <person name="Robben J."/>
        </authorList>
    </citation>
    <scope>NUCLEOTIDE SEQUENCE [LARGE SCALE GENOMIC DNA]</scope>
    <source>
        <strain>ATCC 96604 / S288c / FY1679</strain>
    </source>
</reference>
<reference key="2">
    <citation type="journal article" date="2014" name="G3 (Bethesda)">
        <title>The reference genome sequence of Saccharomyces cerevisiae: Then and now.</title>
        <authorList>
            <person name="Engel S.R."/>
            <person name="Dietrich F.S."/>
            <person name="Fisk D.G."/>
            <person name="Binkley G."/>
            <person name="Balakrishnan R."/>
            <person name="Costanzo M.C."/>
            <person name="Dwight S.S."/>
            <person name="Hitz B.C."/>
            <person name="Karra K."/>
            <person name="Nash R.S."/>
            <person name="Weng S."/>
            <person name="Wong E.D."/>
            <person name="Lloyd P."/>
            <person name="Skrzypek M.S."/>
            <person name="Miyasato S.R."/>
            <person name="Simison M."/>
            <person name="Cherry J.M."/>
        </authorList>
    </citation>
    <scope>GENOME REANNOTATION</scope>
    <source>
        <strain>ATCC 204508 / S288c</strain>
    </source>
</reference>
<reference key="3">
    <citation type="journal article" date="1997" name="Nature">
        <title>The nucleotide sequence of Saccharomyces cerevisiae chromosome VII.</title>
        <authorList>
            <person name="Tettelin H."/>
            <person name="Agostoni-Carbone M.L."/>
            <person name="Albermann K."/>
            <person name="Albers M."/>
            <person name="Arroyo J."/>
            <person name="Backes U."/>
            <person name="Barreiros T."/>
            <person name="Bertani I."/>
            <person name="Bjourson A.J."/>
            <person name="Brueckner M."/>
            <person name="Bruschi C.V."/>
            <person name="Carignani G."/>
            <person name="Castagnoli L."/>
            <person name="Cerdan E."/>
            <person name="Clemente M.L."/>
            <person name="Coblenz A."/>
            <person name="Coglievina M."/>
            <person name="Coissac E."/>
            <person name="Defoor E."/>
            <person name="Del Bino S."/>
            <person name="Delius H."/>
            <person name="Delneri D."/>
            <person name="de Wergifosse P."/>
            <person name="Dujon B."/>
            <person name="Durand P."/>
            <person name="Entian K.-D."/>
            <person name="Eraso P."/>
            <person name="Escribano V."/>
            <person name="Fabiani L."/>
            <person name="Fartmann B."/>
            <person name="Feroli F."/>
            <person name="Feuermann M."/>
            <person name="Frontali L."/>
            <person name="Garcia-Gonzalez M."/>
            <person name="Garcia-Saez M.I."/>
            <person name="Goffeau A."/>
            <person name="Guerreiro P."/>
            <person name="Hani J."/>
            <person name="Hansen M."/>
            <person name="Hebling U."/>
            <person name="Hernandez K."/>
            <person name="Heumann K."/>
            <person name="Hilger F."/>
            <person name="Hofmann B."/>
            <person name="Indge K.J."/>
            <person name="James C.M."/>
            <person name="Klima R."/>
            <person name="Koetter P."/>
            <person name="Kramer B."/>
            <person name="Kramer W."/>
            <person name="Lauquin G."/>
            <person name="Leuther H."/>
            <person name="Louis E.J."/>
            <person name="Maillier E."/>
            <person name="Marconi A."/>
            <person name="Martegani E."/>
            <person name="Mazon M.J."/>
            <person name="Mazzoni C."/>
            <person name="McReynolds A.D.K."/>
            <person name="Melchioretto P."/>
            <person name="Mewes H.-W."/>
            <person name="Minenkova O."/>
            <person name="Mueller-Auer S."/>
            <person name="Nawrocki A."/>
            <person name="Netter P."/>
            <person name="Neu R."/>
            <person name="Nombela C."/>
            <person name="Oliver S.G."/>
            <person name="Panzeri L."/>
            <person name="Paoluzi S."/>
            <person name="Plevani P."/>
            <person name="Portetelle D."/>
            <person name="Portillo F."/>
            <person name="Potier S."/>
            <person name="Purnelle B."/>
            <person name="Rieger M."/>
            <person name="Riles L."/>
            <person name="Rinaldi T."/>
            <person name="Robben J."/>
            <person name="Rodrigues-Pousada C."/>
            <person name="Rodriguez-Belmonte E."/>
            <person name="Rodriguez-Torres A.M."/>
            <person name="Rose M."/>
            <person name="Ruzzi M."/>
            <person name="Saliola M."/>
            <person name="Sanchez-Perez M."/>
            <person name="Schaefer B."/>
            <person name="Schaefer M."/>
            <person name="Scharfe M."/>
            <person name="Schmidheini T."/>
            <person name="Schreer A."/>
            <person name="Skala J."/>
            <person name="Souciet J.-L."/>
            <person name="Steensma H.Y."/>
            <person name="Talla E."/>
            <person name="Thierry A."/>
            <person name="Vandenbol M."/>
            <person name="van der Aart Q.J.M."/>
            <person name="Van Dyck L."/>
            <person name="Vanoni M."/>
            <person name="Verhasselt P."/>
            <person name="Voet M."/>
            <person name="Volckaert G."/>
            <person name="Wambutt R."/>
            <person name="Watson M.D."/>
            <person name="Weber N."/>
            <person name="Wedler E."/>
            <person name="Wedler H."/>
            <person name="Wipfli P."/>
            <person name="Wolf K."/>
            <person name="Wright L.F."/>
            <person name="Zaccaria P."/>
            <person name="Zimmermann M."/>
            <person name="Zollner A."/>
            <person name="Kleine K."/>
        </authorList>
    </citation>
    <scope>NUCLEOTIDE SEQUENCE [LARGE SCALE GENOMIC DNA]</scope>
    <source>
        <strain>ATCC 204508 / S288c</strain>
    </source>
</reference>
<reference key="4">
    <citation type="journal article" date="2002" name="Mol. Cell. Biol.">
        <title>Proteomics analysis reveals stable multiprotein complexes in both fission and budding yeasts containing Myb-related Cdc5p/Cef1p, novel pre-mRNA splicing factors, and snRNAs.</title>
        <authorList>
            <person name="Ohi M.D."/>
            <person name="Link A.J."/>
            <person name="Ren L."/>
            <person name="Jennings J.L."/>
            <person name="McDonald W.H."/>
            <person name="Gould K.L."/>
        </authorList>
    </citation>
    <scope>IDENTIFICATION IN THE CWC COMPLEX</scope>
    <scope>IDENTIFICATION BY MASS SPECTROMETRY</scope>
</reference>
<reference key="5">
    <citation type="journal article" date="2003" name="Mol. Cell">
        <title>Assigning function to yeast proteins by integration of technologies.</title>
        <authorList>
            <person name="Hazbun T.R."/>
            <person name="Malmstroem L."/>
            <person name="Anderson S."/>
            <person name="Graczyk B.J."/>
            <person name="Fox B."/>
            <person name="Riffle M."/>
            <person name="Sundin B.A."/>
            <person name="Aranda J.D."/>
            <person name="McDonald W.H."/>
            <person name="Chiu C.-H."/>
            <person name="Snydsman B.E."/>
            <person name="Bradley P."/>
            <person name="Muller E.G.D."/>
            <person name="Fields S."/>
            <person name="Baker D."/>
            <person name="Yates J.R. III"/>
            <person name="Davis T.N."/>
        </authorList>
    </citation>
    <scope>IDENTIFICATION BY MASS SPECTROMETRY</scope>
</reference>
<reference key="6">
    <citation type="journal article" date="2003" name="Nature">
        <title>Global analysis of protein localization in budding yeast.</title>
        <authorList>
            <person name="Huh W.-K."/>
            <person name="Falvo J.V."/>
            <person name="Gerke L.C."/>
            <person name="Carroll A.S."/>
            <person name="Howson R.W."/>
            <person name="Weissman J.S."/>
            <person name="O'Shea E.K."/>
        </authorList>
    </citation>
    <scope>SUBCELLULAR LOCATION [LARGE SCALE ANALYSIS]</scope>
</reference>
<reference key="7">
    <citation type="journal article" date="2003" name="Nature">
        <title>Global analysis of protein expression in yeast.</title>
        <authorList>
            <person name="Ghaemmaghami S."/>
            <person name="Huh W.-K."/>
            <person name="Bower K."/>
            <person name="Howson R.W."/>
            <person name="Belle A."/>
            <person name="Dephoure N."/>
            <person name="O'Shea E.K."/>
            <person name="Weissman J.S."/>
        </authorList>
    </citation>
    <scope>LEVEL OF PROTEIN EXPRESSION [LARGE SCALE ANALYSIS]</scope>
</reference>
<reference key="8">
    <citation type="journal article" date="2008" name="Mol. Cell. Proteomics">
        <title>A multidimensional chromatography technology for in-depth phosphoproteome analysis.</title>
        <authorList>
            <person name="Albuquerque C.P."/>
            <person name="Smolka M.B."/>
            <person name="Payne S.H."/>
            <person name="Bafna V."/>
            <person name="Eng J."/>
            <person name="Zhou H."/>
        </authorList>
    </citation>
    <scope>IDENTIFICATION BY MASS SPECTROMETRY [LARGE SCALE ANALYSIS]</scope>
</reference>
<reference key="9">
    <citation type="journal article" date="2009" name="Science">
        <title>Global analysis of Cdk1 substrate phosphorylation sites provides insights into evolution.</title>
        <authorList>
            <person name="Holt L.J."/>
            <person name="Tuch B.B."/>
            <person name="Villen J."/>
            <person name="Johnson A.D."/>
            <person name="Gygi S.P."/>
            <person name="Morgan D.O."/>
        </authorList>
    </citation>
    <scope>IDENTIFICATION BY MASS SPECTROMETRY [LARGE SCALE ANALYSIS]</scope>
</reference>
<name>CWC22_YEAST</name>
<proteinExistence type="evidence at protein level"/>
<sequence>MSTATIQDEDIKFQRENWEMIRSHVSPIISNLTMDNLQESHRDLFQVNILIGRNIICKNVVDFTLNKQNGRLIPALSALIALLNSDIPDIGETLAKELMLMFVQQFNRKDYVSCGNILQCLSILFLYDVIHEIVILQILLLLLEKNSLRLVIAVMKICGWKLALVSKKTHDMIWEKLRYILQTQELSSTLRESLETLFEIRQKDYKSGSQGLFILDPTSYTVHTHSYIVSDEDEANKELGNFEKCENFNELTMAFDTLRQKLLINNTSDTNEGSNSQLQIYDMTSTNDVEFKKKIYLVLKSSLSGDEAAHKLLKLKIANNLKKSVVDIIIKSSLQESTFSKFYSILSERMITFHRSWQTAYNETFEQNYTQDIEDYETDQLRILGKFWGHLISYEFLPMDCLKIIKLTEEESCPQGRIFIKFLFQELVNELGLDELQLRLNSSKLDGMFPLEGDAEHIRYSINFFTAIGLGLLTEDMRSRLTIIQEVEDAEEEEKKLREEEELEKLRKKARESQPTQGPKIHESRLFLQKDTRENSRSRSPFTVETRKRARSRTPPRGSRNHRNRSRTPPARRQRHR</sequence>
<evidence type="ECO:0000255" key="1">
    <source>
        <dbReference type="PROSITE-ProRule" id="PRU00698"/>
    </source>
</evidence>
<evidence type="ECO:0000256" key="2">
    <source>
        <dbReference type="SAM" id="MobiDB-lite"/>
    </source>
</evidence>
<evidence type="ECO:0000269" key="3">
    <source>
    </source>
</evidence>
<evidence type="ECO:0000269" key="4">
    <source>
    </source>
</evidence>
<evidence type="ECO:0000269" key="5">
    <source>
    </source>
</evidence>
<evidence type="ECO:0000305" key="6"/>
<evidence type="ECO:0007829" key="7">
    <source>
        <dbReference type="PDB" id="5GMK"/>
    </source>
</evidence>
<evidence type="ECO:0007829" key="8">
    <source>
        <dbReference type="PDB" id="9DTR"/>
    </source>
</evidence>
<organism>
    <name type="scientific">Saccharomyces cerevisiae (strain ATCC 204508 / S288c)</name>
    <name type="common">Baker's yeast</name>
    <dbReference type="NCBI Taxonomy" id="559292"/>
    <lineage>
        <taxon>Eukaryota</taxon>
        <taxon>Fungi</taxon>
        <taxon>Dikarya</taxon>
        <taxon>Ascomycota</taxon>
        <taxon>Saccharomycotina</taxon>
        <taxon>Saccharomycetes</taxon>
        <taxon>Saccharomycetales</taxon>
        <taxon>Saccharomycetaceae</taxon>
        <taxon>Saccharomyces</taxon>
    </lineage>
</organism>
<feature type="chain" id="PRO_0000215678" description="Pre-mRNA-splicing factor CWC22">
    <location>
        <begin position="1"/>
        <end position="577"/>
    </location>
</feature>
<feature type="domain" description="MIF4G" evidence="1">
    <location>
        <begin position="22"/>
        <end position="204"/>
    </location>
</feature>
<feature type="domain" description="MI" evidence="1">
    <location>
        <begin position="290"/>
        <end position="407"/>
    </location>
</feature>
<feature type="region of interest" description="Disordered" evidence="2">
    <location>
        <begin position="505"/>
        <end position="577"/>
    </location>
</feature>
<feature type="compositionally biased region" description="Basic and acidic residues" evidence="2">
    <location>
        <begin position="520"/>
        <end position="537"/>
    </location>
</feature>
<feature type="compositionally biased region" description="Basic residues" evidence="2">
    <location>
        <begin position="548"/>
        <end position="577"/>
    </location>
</feature>
<feature type="helix" evidence="8">
    <location>
        <begin position="8"/>
        <end position="30"/>
    </location>
</feature>
<feature type="strand" evidence="8">
    <location>
        <begin position="34"/>
        <end position="36"/>
    </location>
</feature>
<feature type="helix" evidence="8">
    <location>
        <begin position="37"/>
        <end position="44"/>
    </location>
</feature>
<feature type="turn" evidence="8">
    <location>
        <begin position="49"/>
        <end position="52"/>
    </location>
</feature>
<feature type="helix" evidence="8">
    <location>
        <begin position="53"/>
        <end position="65"/>
    </location>
</feature>
<feature type="helix" evidence="8">
    <location>
        <begin position="68"/>
        <end position="70"/>
    </location>
</feature>
<feature type="helix" evidence="8">
    <location>
        <begin position="73"/>
        <end position="86"/>
    </location>
</feature>
<feature type="helix" evidence="8">
    <location>
        <begin position="88"/>
        <end position="107"/>
    </location>
</feature>
<feature type="helix" evidence="8">
    <location>
        <begin position="111"/>
        <end position="126"/>
    </location>
</feature>
<feature type="helix" evidence="8">
    <location>
        <begin position="132"/>
        <end position="143"/>
    </location>
</feature>
<feature type="turn" evidence="8">
    <location>
        <begin position="144"/>
        <end position="146"/>
    </location>
</feature>
<feature type="helix" evidence="8">
    <location>
        <begin position="148"/>
        <end position="165"/>
    </location>
</feature>
<feature type="helix" evidence="8">
    <location>
        <begin position="167"/>
        <end position="183"/>
    </location>
</feature>
<feature type="helix" evidence="8">
    <location>
        <begin position="188"/>
        <end position="203"/>
    </location>
</feature>
<feature type="helix" evidence="8">
    <location>
        <begin position="205"/>
        <end position="208"/>
    </location>
</feature>
<feature type="strand" evidence="8">
    <location>
        <begin position="209"/>
        <end position="212"/>
    </location>
</feature>
<feature type="helix" evidence="8">
    <location>
        <begin position="217"/>
        <end position="219"/>
    </location>
</feature>
<feature type="turn" evidence="8">
    <location>
        <begin position="237"/>
        <end position="240"/>
    </location>
</feature>
<feature type="helix" evidence="8">
    <location>
        <begin position="248"/>
        <end position="266"/>
    </location>
</feature>
<feature type="helix" evidence="8">
    <location>
        <begin position="289"/>
        <end position="300"/>
    </location>
</feature>
<feature type="strand" evidence="7">
    <location>
        <begin position="301"/>
        <end position="303"/>
    </location>
</feature>
<feature type="helix" evidence="8">
    <location>
        <begin position="305"/>
        <end position="314"/>
    </location>
</feature>
<feature type="helix" evidence="8">
    <location>
        <begin position="319"/>
        <end position="321"/>
    </location>
</feature>
<feature type="helix" evidence="8">
    <location>
        <begin position="322"/>
        <end position="335"/>
    </location>
</feature>
<feature type="strand" evidence="8">
    <location>
        <begin position="336"/>
        <end position="338"/>
    </location>
</feature>
<feature type="helix" evidence="8">
    <location>
        <begin position="341"/>
        <end position="353"/>
    </location>
</feature>
<feature type="helix" evidence="8">
    <location>
        <begin position="355"/>
        <end position="370"/>
    </location>
</feature>
<feature type="helix" evidence="8">
    <location>
        <begin position="372"/>
        <end position="375"/>
    </location>
</feature>
<feature type="helix" evidence="8">
    <location>
        <begin position="378"/>
        <end position="393"/>
    </location>
</feature>
<feature type="helix" evidence="8">
    <location>
        <begin position="399"/>
        <end position="404"/>
    </location>
</feature>
<feature type="turn" evidence="8">
    <location>
        <begin position="409"/>
        <end position="411"/>
    </location>
</feature>
<feature type="helix" evidence="8">
    <location>
        <begin position="414"/>
        <end position="441"/>
    </location>
</feature>
<feature type="turn" evidence="8">
    <location>
        <begin position="446"/>
        <end position="448"/>
    </location>
</feature>
<feature type="strand" evidence="8">
    <location>
        <begin position="451"/>
        <end position="453"/>
    </location>
</feature>
<feature type="helix" evidence="8">
    <location>
        <begin position="455"/>
        <end position="467"/>
    </location>
</feature>
<feature type="helix" evidence="8">
    <location>
        <begin position="471"/>
        <end position="484"/>
    </location>
</feature>
<protein>
    <recommendedName>
        <fullName>Pre-mRNA-splicing factor CWC22</fullName>
    </recommendedName>
    <alternativeName>
        <fullName>Complexed with CEF1 protein 22</fullName>
    </alternativeName>
</protein>
<comment type="function">
    <text>May be involved in pre-mRNA splicing.</text>
</comment>
<comment type="subunit">
    <text evidence="3">Belongs to the CWC complex (or CEF1-associated complex), a spliceosome subcomplex composed of the U2, U5 and U6 snRNAs and at least BUD13, BUD31, BRR2, CDC40, CEF1, CLF1, CUS1, CWC2, CWC15, CWC21, CWC22, CWC23, CWC24, CWC25, CWC27, ECM2, HSH155, IST3, ISY1, LEA1, MSL1, NTC20, PRP8, PRP9, PRP11, PRP19, PRP21, PRP22, PRP45, PRP46, SLU7, SMB1, SMD1, SMD2, SMD3, SMX2, SMX3, SNT309, SNU114, SPP2, SYF1, SYF2, RSE1 and YJU2.</text>
</comment>
<comment type="subcellular location">
    <subcellularLocation>
        <location evidence="4">Cytoplasm</location>
    </subcellularLocation>
    <subcellularLocation>
        <location evidence="4">Nucleus</location>
    </subcellularLocation>
</comment>
<comment type="miscellaneous">
    <text evidence="5">Present with 3260 molecules/cell in log phase SD medium.</text>
</comment>
<comment type="similarity">
    <text evidence="6">Belongs to the CWC22 family.</text>
</comment>
<dbReference type="EMBL" id="Z73063">
    <property type="protein sequence ID" value="CAA97309.1"/>
    <property type="molecule type" value="Genomic_DNA"/>
</dbReference>
<dbReference type="EMBL" id="BK006941">
    <property type="protein sequence ID" value="DAA08366.1"/>
    <property type="molecule type" value="Genomic_DNA"/>
</dbReference>
<dbReference type="PIR" id="S64613">
    <property type="entry name" value="S64613"/>
</dbReference>
<dbReference type="RefSeq" id="NP_011794.3">
    <property type="nucleotide sequence ID" value="NM_001181407.3"/>
</dbReference>
<dbReference type="PDB" id="5GM6">
    <property type="method" value="EM"/>
    <property type="resolution" value="3.50 A"/>
    <property type="chains" value="Z=1-577"/>
</dbReference>
<dbReference type="PDB" id="5GMK">
    <property type="method" value="EM"/>
    <property type="resolution" value="3.40 A"/>
    <property type="chains" value="Z=1-577"/>
</dbReference>
<dbReference type="PDB" id="5LQW">
    <property type="method" value="EM"/>
    <property type="resolution" value="5.80 A"/>
    <property type="chains" value="H=1-577"/>
</dbReference>
<dbReference type="PDB" id="5MPS">
    <property type="method" value="EM"/>
    <property type="resolution" value="3.85 A"/>
    <property type="chains" value="H=1-577"/>
</dbReference>
<dbReference type="PDB" id="5MQ0">
    <property type="method" value="EM"/>
    <property type="resolution" value="4.17 A"/>
    <property type="chains" value="H=1-577"/>
</dbReference>
<dbReference type="PDB" id="5WSG">
    <property type="method" value="EM"/>
    <property type="resolution" value="4.00 A"/>
    <property type="chains" value="Z=1-577"/>
</dbReference>
<dbReference type="PDB" id="5YLZ">
    <property type="method" value="EM"/>
    <property type="resolution" value="3.60 A"/>
    <property type="chains" value="S=1-577"/>
</dbReference>
<dbReference type="PDB" id="6BK8">
    <property type="method" value="EM"/>
    <property type="resolution" value="3.30 A"/>
    <property type="chains" value="L=1-577"/>
</dbReference>
<dbReference type="PDB" id="6EXN">
    <property type="method" value="EM"/>
    <property type="resolution" value="3.70 A"/>
    <property type="chains" value="H=1-577"/>
</dbReference>
<dbReference type="PDB" id="6J6G">
    <property type="method" value="EM"/>
    <property type="resolution" value="3.20 A"/>
    <property type="chains" value="Z=1-577"/>
</dbReference>
<dbReference type="PDB" id="6J6H">
    <property type="method" value="EM"/>
    <property type="resolution" value="3.60 A"/>
    <property type="chains" value="Z=1-577"/>
</dbReference>
<dbReference type="PDB" id="6J6N">
    <property type="method" value="EM"/>
    <property type="resolution" value="3.86 A"/>
    <property type="chains" value="Z=1-577"/>
</dbReference>
<dbReference type="PDB" id="6J6Q">
    <property type="method" value="EM"/>
    <property type="resolution" value="3.70 A"/>
    <property type="chains" value="Z=1-577"/>
</dbReference>
<dbReference type="PDB" id="9DTR">
    <property type="method" value="EM"/>
    <property type="resolution" value="2.31 A"/>
    <property type="chains" value="H=1-577"/>
</dbReference>
<dbReference type="PDBsum" id="5GM6"/>
<dbReference type="PDBsum" id="5GMK"/>
<dbReference type="PDBsum" id="5LQW"/>
<dbReference type="PDBsum" id="5MPS"/>
<dbReference type="PDBsum" id="5MQ0"/>
<dbReference type="PDBsum" id="5WSG"/>
<dbReference type="PDBsum" id="5YLZ"/>
<dbReference type="PDBsum" id="6BK8"/>
<dbReference type="PDBsum" id="6EXN"/>
<dbReference type="PDBsum" id="6J6G"/>
<dbReference type="PDBsum" id="6J6H"/>
<dbReference type="PDBsum" id="6J6N"/>
<dbReference type="PDBsum" id="6J6Q"/>
<dbReference type="PDBsum" id="9DTR"/>
<dbReference type="EMDB" id="EMD-0686"/>
<dbReference type="EMDB" id="EMD-0687"/>
<dbReference type="EMDB" id="EMD-0691"/>
<dbReference type="EMDB" id="EMD-0692"/>
<dbReference type="EMDB" id="EMD-3539"/>
<dbReference type="EMDB" id="EMD-3541"/>
<dbReference type="EMDB" id="EMD-3979"/>
<dbReference type="EMDB" id="EMD-47157"/>
<dbReference type="EMDB" id="EMD-6839"/>
<dbReference type="EMDB" id="EMD-7109"/>
<dbReference type="EMDB" id="EMD-9524"/>
<dbReference type="EMDB" id="EMD-9525"/>
<dbReference type="SMR" id="P53333"/>
<dbReference type="BioGRID" id="33528">
    <property type="interactions" value="182"/>
</dbReference>
<dbReference type="ComplexPortal" id="CPX-1651">
    <property type="entry name" value="PRP19-associated complex"/>
</dbReference>
<dbReference type="DIP" id="DIP-1869N"/>
<dbReference type="FunCoup" id="P53333">
    <property type="interactions" value="1056"/>
</dbReference>
<dbReference type="IntAct" id="P53333">
    <property type="interactions" value="45"/>
</dbReference>
<dbReference type="MINT" id="P53333"/>
<dbReference type="STRING" id="4932.YGR278W"/>
<dbReference type="iPTMnet" id="P53333"/>
<dbReference type="PaxDb" id="4932-YGR278W"/>
<dbReference type="PeptideAtlas" id="P53333"/>
<dbReference type="EnsemblFungi" id="YGR278W_mRNA">
    <property type="protein sequence ID" value="YGR278W"/>
    <property type="gene ID" value="YGR278W"/>
</dbReference>
<dbReference type="GeneID" id="853195"/>
<dbReference type="KEGG" id="sce:YGR278W"/>
<dbReference type="AGR" id="SGD:S000003510"/>
<dbReference type="SGD" id="S000003510">
    <property type="gene designation" value="CWC22"/>
</dbReference>
<dbReference type="VEuPathDB" id="FungiDB:YGR278W"/>
<dbReference type="eggNOG" id="KOG2140">
    <property type="taxonomic scope" value="Eukaryota"/>
</dbReference>
<dbReference type="GeneTree" id="ENSGT00940000153458"/>
<dbReference type="HOGENOM" id="CLU_006308_3_4_1"/>
<dbReference type="InParanoid" id="P53333"/>
<dbReference type="OMA" id="ILTEDMR"/>
<dbReference type="OrthoDB" id="3938623at2759"/>
<dbReference type="BioCyc" id="YEAST:G3O-30942-MONOMER"/>
<dbReference type="BioGRID-ORCS" id="853195">
    <property type="hits" value="0 hits in 10 CRISPR screens"/>
</dbReference>
<dbReference type="PRO" id="PR:P53333"/>
<dbReference type="Proteomes" id="UP000002311">
    <property type="component" value="Chromosome VII"/>
</dbReference>
<dbReference type="RNAct" id="P53333">
    <property type="molecule type" value="protein"/>
</dbReference>
<dbReference type="GO" id="GO:0071013">
    <property type="term" value="C:catalytic step 2 spliceosome"/>
    <property type="evidence" value="ECO:0000318"/>
    <property type="project" value="GO_Central"/>
</dbReference>
<dbReference type="GO" id="GO:0005737">
    <property type="term" value="C:cytoplasm"/>
    <property type="evidence" value="ECO:0007669"/>
    <property type="project" value="UniProtKB-SubCell"/>
</dbReference>
<dbReference type="GO" id="GO:0000974">
    <property type="term" value="C:Prp19 complex"/>
    <property type="evidence" value="ECO:0000353"/>
    <property type="project" value="ComplexPortal"/>
</dbReference>
<dbReference type="GO" id="GO:0005684">
    <property type="term" value="C:U2-type spliceosomal complex"/>
    <property type="evidence" value="ECO:0000314"/>
    <property type="project" value="SGD"/>
</dbReference>
<dbReference type="GO" id="GO:0003723">
    <property type="term" value="F:RNA binding"/>
    <property type="evidence" value="ECO:0000318"/>
    <property type="project" value="GO_Central"/>
</dbReference>
<dbReference type="GO" id="GO:0000398">
    <property type="term" value="P:mRNA splicing, via spliceosome"/>
    <property type="evidence" value="ECO:0000314"/>
    <property type="project" value="SGD"/>
</dbReference>
<dbReference type="Gene3D" id="1.25.40.180">
    <property type="match status" value="1"/>
</dbReference>
<dbReference type="InterPro" id="IPR016024">
    <property type="entry name" value="ARM-type_fold"/>
</dbReference>
<dbReference type="InterPro" id="IPR050781">
    <property type="entry name" value="CWC22_splicing_factor"/>
</dbReference>
<dbReference type="InterPro" id="IPR003891">
    <property type="entry name" value="Initiation_fac_eIF4g_MI"/>
</dbReference>
<dbReference type="InterPro" id="IPR003890">
    <property type="entry name" value="MIF4G-like_typ-3"/>
</dbReference>
<dbReference type="PANTHER" id="PTHR18034">
    <property type="entry name" value="CELL CYCLE CONTROL PROTEIN CWF22-RELATED"/>
    <property type="match status" value="1"/>
</dbReference>
<dbReference type="PANTHER" id="PTHR18034:SF3">
    <property type="entry name" value="PRE-MRNA-SPLICING FACTOR CWC22 HOMOLOG"/>
    <property type="match status" value="1"/>
</dbReference>
<dbReference type="Pfam" id="PF02847">
    <property type="entry name" value="MA3"/>
    <property type="match status" value="1"/>
</dbReference>
<dbReference type="SMART" id="SM00544">
    <property type="entry name" value="MA3"/>
    <property type="match status" value="1"/>
</dbReference>
<dbReference type="SMART" id="SM00543">
    <property type="entry name" value="MIF4G"/>
    <property type="match status" value="1"/>
</dbReference>
<dbReference type="SUPFAM" id="SSF48371">
    <property type="entry name" value="ARM repeat"/>
    <property type="match status" value="1"/>
</dbReference>
<dbReference type="PROSITE" id="PS51366">
    <property type="entry name" value="MI"/>
    <property type="match status" value="1"/>
</dbReference>
<keyword id="KW-0002">3D-structure</keyword>
<keyword id="KW-0963">Cytoplasm</keyword>
<keyword id="KW-0507">mRNA processing</keyword>
<keyword id="KW-0508">mRNA splicing</keyword>
<keyword id="KW-0539">Nucleus</keyword>
<keyword id="KW-1185">Reference proteome</keyword>
<keyword id="KW-0747">Spliceosome</keyword>
<gene>
    <name type="primary">CWC22</name>
    <name type="ordered locus">YGR278W</name>
</gene>
<accession>P53333</accession>
<accession>D6VV55</accession>